<comment type="function">
    <text evidence="1">Transfers the 4'-phosphopantetheine moiety from coenzyme A to a Ser of acyl-carrier-protein.</text>
</comment>
<comment type="catalytic activity">
    <reaction evidence="1">
        <text>apo-[ACP] + CoA = holo-[ACP] + adenosine 3',5'-bisphosphate + H(+)</text>
        <dbReference type="Rhea" id="RHEA:12068"/>
        <dbReference type="Rhea" id="RHEA-COMP:9685"/>
        <dbReference type="Rhea" id="RHEA-COMP:9690"/>
        <dbReference type="ChEBI" id="CHEBI:15378"/>
        <dbReference type="ChEBI" id="CHEBI:29999"/>
        <dbReference type="ChEBI" id="CHEBI:57287"/>
        <dbReference type="ChEBI" id="CHEBI:58343"/>
        <dbReference type="ChEBI" id="CHEBI:64479"/>
        <dbReference type="EC" id="2.7.8.7"/>
    </reaction>
</comment>
<comment type="cofactor">
    <cofactor evidence="1">
        <name>Mg(2+)</name>
        <dbReference type="ChEBI" id="CHEBI:18420"/>
    </cofactor>
</comment>
<comment type="subcellular location">
    <subcellularLocation>
        <location evidence="1">Cytoplasm</location>
    </subcellularLocation>
</comment>
<comment type="similarity">
    <text evidence="1">Belongs to the P-Pant transferase superfamily. AcpS family.</text>
</comment>
<sequence>MIYGIGTDLVETSRITRLLEKYGERFARRLLTDEEWPEYAKSMQPAMFLAKRFAAKEALAKAFGTGIRHPVSLSHIGVTHDTLGKPYFKFHPELHTLVQNEGITRHHLSISDELNLACAFVILEK</sequence>
<reference key="1">
    <citation type="submission" date="2005-08" db="EMBL/GenBank/DDBJ databases">
        <title>Complete sequence of chromosome 1 of Nitrosospira multiformis ATCC 25196.</title>
        <authorList>
            <person name="Copeland A."/>
            <person name="Lucas S."/>
            <person name="Lapidus A."/>
            <person name="Barry K."/>
            <person name="Detter J.C."/>
            <person name="Glavina T."/>
            <person name="Hammon N."/>
            <person name="Israni S."/>
            <person name="Pitluck S."/>
            <person name="Chain P."/>
            <person name="Malfatti S."/>
            <person name="Shin M."/>
            <person name="Vergez L."/>
            <person name="Schmutz J."/>
            <person name="Larimer F."/>
            <person name="Land M."/>
            <person name="Hauser L."/>
            <person name="Kyrpides N."/>
            <person name="Lykidis A."/>
            <person name="Richardson P."/>
        </authorList>
    </citation>
    <scope>NUCLEOTIDE SEQUENCE [LARGE SCALE GENOMIC DNA]</scope>
    <source>
        <strain>ATCC 25196 / NCIMB 11849 / C 71</strain>
    </source>
</reference>
<keyword id="KW-0963">Cytoplasm</keyword>
<keyword id="KW-0275">Fatty acid biosynthesis</keyword>
<keyword id="KW-0276">Fatty acid metabolism</keyword>
<keyword id="KW-0444">Lipid biosynthesis</keyword>
<keyword id="KW-0443">Lipid metabolism</keyword>
<keyword id="KW-0460">Magnesium</keyword>
<keyword id="KW-0479">Metal-binding</keyword>
<keyword id="KW-1185">Reference proteome</keyword>
<keyword id="KW-0808">Transferase</keyword>
<evidence type="ECO:0000255" key="1">
    <source>
        <dbReference type="HAMAP-Rule" id="MF_00101"/>
    </source>
</evidence>
<proteinExistence type="inferred from homology"/>
<gene>
    <name evidence="1" type="primary">acpS</name>
    <name type="ordered locus">Nmul_A1760</name>
</gene>
<protein>
    <recommendedName>
        <fullName evidence="1">Holo-[acyl-carrier-protein] synthase</fullName>
        <shortName evidence="1">Holo-ACP synthase</shortName>
        <ecNumber evidence="1">2.7.8.7</ecNumber>
    </recommendedName>
    <alternativeName>
        <fullName evidence="1">4'-phosphopantetheinyl transferase AcpS</fullName>
    </alternativeName>
</protein>
<name>ACPS_NITMU</name>
<dbReference type="EC" id="2.7.8.7" evidence="1"/>
<dbReference type="EMBL" id="CP000103">
    <property type="protein sequence ID" value="ABB75057.1"/>
    <property type="molecule type" value="Genomic_DNA"/>
</dbReference>
<dbReference type="RefSeq" id="WP_011381077.1">
    <property type="nucleotide sequence ID" value="NC_007614.1"/>
</dbReference>
<dbReference type="SMR" id="Q2Y864"/>
<dbReference type="STRING" id="323848.Nmul_A1760"/>
<dbReference type="KEGG" id="nmu:Nmul_A1760"/>
<dbReference type="eggNOG" id="COG0736">
    <property type="taxonomic scope" value="Bacteria"/>
</dbReference>
<dbReference type="HOGENOM" id="CLU_089696_3_1_4"/>
<dbReference type="OrthoDB" id="517356at2"/>
<dbReference type="Proteomes" id="UP000002718">
    <property type="component" value="Chromosome"/>
</dbReference>
<dbReference type="GO" id="GO:0005737">
    <property type="term" value="C:cytoplasm"/>
    <property type="evidence" value="ECO:0007669"/>
    <property type="project" value="UniProtKB-SubCell"/>
</dbReference>
<dbReference type="GO" id="GO:0008897">
    <property type="term" value="F:holo-[acyl-carrier-protein] synthase activity"/>
    <property type="evidence" value="ECO:0007669"/>
    <property type="project" value="UniProtKB-UniRule"/>
</dbReference>
<dbReference type="GO" id="GO:0000287">
    <property type="term" value="F:magnesium ion binding"/>
    <property type="evidence" value="ECO:0007669"/>
    <property type="project" value="UniProtKB-UniRule"/>
</dbReference>
<dbReference type="GO" id="GO:0006633">
    <property type="term" value="P:fatty acid biosynthetic process"/>
    <property type="evidence" value="ECO:0007669"/>
    <property type="project" value="UniProtKB-UniRule"/>
</dbReference>
<dbReference type="FunFam" id="3.90.470.20:FF:000001">
    <property type="entry name" value="Holo-[acyl-carrier-protein] synthase"/>
    <property type="match status" value="1"/>
</dbReference>
<dbReference type="Gene3D" id="3.90.470.20">
    <property type="entry name" value="4'-phosphopantetheinyl transferase domain"/>
    <property type="match status" value="1"/>
</dbReference>
<dbReference type="HAMAP" id="MF_00101">
    <property type="entry name" value="AcpS"/>
    <property type="match status" value="1"/>
</dbReference>
<dbReference type="InterPro" id="IPR008278">
    <property type="entry name" value="4-PPantetheinyl_Trfase_dom"/>
</dbReference>
<dbReference type="InterPro" id="IPR037143">
    <property type="entry name" value="4-PPantetheinyl_Trfase_dom_sf"/>
</dbReference>
<dbReference type="InterPro" id="IPR002582">
    <property type="entry name" value="ACPS"/>
</dbReference>
<dbReference type="InterPro" id="IPR004568">
    <property type="entry name" value="Ppantetheine-prot_Trfase_dom"/>
</dbReference>
<dbReference type="NCBIfam" id="TIGR00516">
    <property type="entry name" value="acpS"/>
    <property type="match status" value="1"/>
</dbReference>
<dbReference type="NCBIfam" id="TIGR00556">
    <property type="entry name" value="pantethn_trn"/>
    <property type="match status" value="1"/>
</dbReference>
<dbReference type="Pfam" id="PF01648">
    <property type="entry name" value="ACPS"/>
    <property type="match status" value="1"/>
</dbReference>
<dbReference type="SUPFAM" id="SSF56214">
    <property type="entry name" value="4'-phosphopantetheinyl transferase"/>
    <property type="match status" value="1"/>
</dbReference>
<organism>
    <name type="scientific">Nitrosospira multiformis (strain ATCC 25196 / NCIMB 11849 / C 71)</name>
    <dbReference type="NCBI Taxonomy" id="323848"/>
    <lineage>
        <taxon>Bacteria</taxon>
        <taxon>Pseudomonadati</taxon>
        <taxon>Pseudomonadota</taxon>
        <taxon>Betaproteobacteria</taxon>
        <taxon>Nitrosomonadales</taxon>
        <taxon>Nitrosomonadaceae</taxon>
        <taxon>Nitrosospira</taxon>
    </lineage>
</organism>
<feature type="chain" id="PRO_1000008464" description="Holo-[acyl-carrier-protein] synthase">
    <location>
        <begin position="1"/>
        <end position="125"/>
    </location>
</feature>
<feature type="binding site" evidence="1">
    <location>
        <position position="8"/>
    </location>
    <ligand>
        <name>Mg(2+)</name>
        <dbReference type="ChEBI" id="CHEBI:18420"/>
    </ligand>
</feature>
<feature type="binding site" evidence="1">
    <location>
        <position position="57"/>
    </location>
    <ligand>
        <name>Mg(2+)</name>
        <dbReference type="ChEBI" id="CHEBI:18420"/>
    </ligand>
</feature>
<accession>Q2Y864</accession>